<gene>
    <name evidence="1" type="primary">petC</name>
    <name type="ordered locus">MAE_19220</name>
</gene>
<dbReference type="EC" id="7.1.1.6" evidence="1"/>
<dbReference type="EMBL" id="AP009552">
    <property type="protein sequence ID" value="BAG01744.1"/>
    <property type="molecule type" value="Genomic_DNA"/>
</dbReference>
<dbReference type="RefSeq" id="WP_002781457.1">
    <property type="nucleotide sequence ID" value="NC_010296.1"/>
</dbReference>
<dbReference type="SMR" id="B0JXB7"/>
<dbReference type="STRING" id="449447.MAE_19220"/>
<dbReference type="PaxDb" id="449447-MAE_19220"/>
<dbReference type="EnsemblBacteria" id="BAG01744">
    <property type="protein sequence ID" value="BAG01744"/>
    <property type="gene ID" value="MAE_19220"/>
</dbReference>
<dbReference type="KEGG" id="mar:MAE_19220"/>
<dbReference type="eggNOG" id="COG0723">
    <property type="taxonomic scope" value="Bacteria"/>
</dbReference>
<dbReference type="HOGENOM" id="CLU_055690_8_0_3"/>
<dbReference type="BioCyc" id="MAER449447:MAE_RS08410-MONOMER"/>
<dbReference type="Proteomes" id="UP000001510">
    <property type="component" value="Chromosome"/>
</dbReference>
<dbReference type="GO" id="GO:0031676">
    <property type="term" value="C:plasma membrane-derived thylakoid membrane"/>
    <property type="evidence" value="ECO:0007669"/>
    <property type="project" value="UniProtKB-SubCell"/>
</dbReference>
<dbReference type="GO" id="GO:0051537">
    <property type="term" value="F:2 iron, 2 sulfur cluster binding"/>
    <property type="evidence" value="ECO:0007669"/>
    <property type="project" value="UniProtKB-KW"/>
</dbReference>
<dbReference type="GO" id="GO:0045158">
    <property type="term" value="F:electron transporter, transferring electrons within cytochrome b6/f complex of photosystem II activity"/>
    <property type="evidence" value="ECO:0007669"/>
    <property type="project" value="UniProtKB-UniRule"/>
</dbReference>
<dbReference type="GO" id="GO:0046872">
    <property type="term" value="F:metal ion binding"/>
    <property type="evidence" value="ECO:0007669"/>
    <property type="project" value="UniProtKB-KW"/>
</dbReference>
<dbReference type="GO" id="GO:0004497">
    <property type="term" value="F:monooxygenase activity"/>
    <property type="evidence" value="ECO:0007669"/>
    <property type="project" value="UniProtKB-ARBA"/>
</dbReference>
<dbReference type="GO" id="GO:0016705">
    <property type="term" value="F:oxidoreductase activity, acting on paired donors, with incorporation or reduction of molecular oxygen"/>
    <property type="evidence" value="ECO:0007669"/>
    <property type="project" value="UniProtKB-ARBA"/>
</dbReference>
<dbReference type="GO" id="GO:0009496">
    <property type="term" value="F:plastoquinol--plastocyanin reductase activity"/>
    <property type="evidence" value="ECO:0007669"/>
    <property type="project" value="UniProtKB-UniRule"/>
</dbReference>
<dbReference type="GO" id="GO:0015979">
    <property type="term" value="P:photosynthesis"/>
    <property type="evidence" value="ECO:0007669"/>
    <property type="project" value="UniProtKB-UniRule"/>
</dbReference>
<dbReference type="CDD" id="cd03471">
    <property type="entry name" value="Rieske_cytochrome_b6f"/>
    <property type="match status" value="1"/>
</dbReference>
<dbReference type="FunFam" id="2.102.10.10:FF:000007">
    <property type="entry name" value="Cytochrome b6-f complex iron-sulfur subunit"/>
    <property type="match status" value="1"/>
</dbReference>
<dbReference type="Gene3D" id="2.102.10.10">
    <property type="entry name" value="Rieske [2Fe-2S] iron-sulphur domain"/>
    <property type="match status" value="1"/>
</dbReference>
<dbReference type="Gene3D" id="1.20.5.700">
    <property type="entry name" value="Single helix bin"/>
    <property type="match status" value="1"/>
</dbReference>
<dbReference type="HAMAP" id="MF_01335">
    <property type="entry name" value="Cytb6_f_Rieske"/>
    <property type="match status" value="1"/>
</dbReference>
<dbReference type="InterPro" id="IPR023960">
    <property type="entry name" value="Cyt_b6_f_Rieske"/>
</dbReference>
<dbReference type="InterPro" id="IPR017941">
    <property type="entry name" value="Rieske_2Fe-2S"/>
</dbReference>
<dbReference type="InterPro" id="IPR036922">
    <property type="entry name" value="Rieske_2Fe-2S_sf"/>
</dbReference>
<dbReference type="InterPro" id="IPR014349">
    <property type="entry name" value="Rieske_Fe-S_prot"/>
</dbReference>
<dbReference type="InterPro" id="IPR005805">
    <property type="entry name" value="Rieske_Fe-S_prot_C"/>
</dbReference>
<dbReference type="NCBIfam" id="NF045928">
    <property type="entry name" value="Cytb6fFeSPetC"/>
    <property type="match status" value="1"/>
</dbReference>
<dbReference type="NCBIfam" id="NF010001">
    <property type="entry name" value="PRK13474.1"/>
    <property type="match status" value="1"/>
</dbReference>
<dbReference type="PANTHER" id="PTHR10134">
    <property type="entry name" value="CYTOCHROME B-C1 COMPLEX SUBUNIT RIESKE, MITOCHONDRIAL"/>
    <property type="match status" value="1"/>
</dbReference>
<dbReference type="Pfam" id="PF00355">
    <property type="entry name" value="Rieske"/>
    <property type="match status" value="1"/>
</dbReference>
<dbReference type="Pfam" id="PF25471">
    <property type="entry name" value="TM_PetC"/>
    <property type="match status" value="1"/>
</dbReference>
<dbReference type="PRINTS" id="PR00162">
    <property type="entry name" value="RIESKE"/>
</dbReference>
<dbReference type="SUPFAM" id="SSF50022">
    <property type="entry name" value="ISP domain"/>
    <property type="match status" value="1"/>
</dbReference>
<dbReference type="PROSITE" id="PS51296">
    <property type="entry name" value="RIESKE"/>
    <property type="match status" value="1"/>
</dbReference>
<name>UCRI_MICAN</name>
<protein>
    <recommendedName>
        <fullName evidence="1">Cytochrome b6-f complex iron-sulfur subunit</fullName>
        <ecNumber evidence="1">7.1.1.6</ecNumber>
    </recommendedName>
    <alternativeName>
        <fullName evidence="1">Plastohydroquinone:plastocyanin oxidoreductase iron-sulfur protein</fullName>
        <shortName evidence="1">ISP</shortName>
        <shortName evidence="1">RISP</shortName>
    </alternativeName>
    <alternativeName>
        <fullName evidence="1">Rieske iron-sulfur protein</fullName>
    </alternativeName>
</protein>
<keyword id="KW-0001">2Fe-2S</keyword>
<keyword id="KW-1015">Disulfide bond</keyword>
<keyword id="KW-0249">Electron transport</keyword>
<keyword id="KW-0408">Iron</keyword>
<keyword id="KW-0411">Iron-sulfur</keyword>
<keyword id="KW-0472">Membrane</keyword>
<keyword id="KW-0479">Metal-binding</keyword>
<keyword id="KW-0793">Thylakoid</keyword>
<keyword id="KW-1278">Translocase</keyword>
<keyword id="KW-0812">Transmembrane</keyword>
<keyword id="KW-1133">Transmembrane helix</keyword>
<keyword id="KW-0813">Transport</keyword>
<sequence>MSQVSGTDVPDLGRRQFMNLLTFGTITGVAAGALYPIVKYFIPPSAGGTGGGVTAKDALGNDVIVSQFLTSHNAGDRTLAQGLKGDPTYLVVQEDKTLANYGINAVCTHLGCVVPWNASEEKFMCPCHGSQYNAEGKVVRGPAPLSLALAHANVTDNDKVVFSTWTETDFRTGEEPWWS</sequence>
<comment type="function">
    <text evidence="1">Component of the cytochrome b6-f complex, which mediates electron transfer between photosystem II (PSII) and photosystem I (PSI), cyclic electron flow around PSI, and state transitions.</text>
</comment>
<comment type="catalytic activity">
    <reaction evidence="1">
        <text>2 oxidized [plastocyanin] + a plastoquinol + 2 H(+)(in) = 2 reduced [plastocyanin] + a plastoquinone + 4 H(+)(out)</text>
        <dbReference type="Rhea" id="RHEA:22148"/>
        <dbReference type="Rhea" id="RHEA-COMP:9561"/>
        <dbReference type="Rhea" id="RHEA-COMP:9562"/>
        <dbReference type="Rhea" id="RHEA-COMP:10039"/>
        <dbReference type="Rhea" id="RHEA-COMP:10040"/>
        <dbReference type="ChEBI" id="CHEBI:15378"/>
        <dbReference type="ChEBI" id="CHEBI:17757"/>
        <dbReference type="ChEBI" id="CHEBI:29036"/>
        <dbReference type="ChEBI" id="CHEBI:49552"/>
        <dbReference type="ChEBI" id="CHEBI:62192"/>
        <dbReference type="EC" id="7.1.1.6"/>
    </reaction>
</comment>
<comment type="cofactor">
    <cofactor evidence="1">
        <name>[2Fe-2S] cluster</name>
        <dbReference type="ChEBI" id="CHEBI:190135"/>
    </cofactor>
    <text evidence="1">Binds 1 [2Fe-2S] cluster per subunit.</text>
</comment>
<comment type="subunit">
    <text evidence="1">The 4 large subunits of the cytochrome b6-f complex are cytochrome b6, subunit IV (17 kDa polypeptide, PetD), cytochrome f and the Rieske protein, while the 4 small subunits are PetG, PetL, PetM and PetN. The complex functions as a dimer.</text>
</comment>
<comment type="subcellular location">
    <subcellularLocation>
        <location evidence="1">Cellular thylakoid membrane</location>
        <topology evidence="1">Single-pass membrane protein</topology>
    </subcellularLocation>
    <text evidence="1">The transmembrane helix obliquely spans the membrane in one monomer, and its extrinsic C-terminal domain is part of the other monomer.</text>
</comment>
<comment type="miscellaneous">
    <text>The Rieske iron-sulfur protein is a high potential 2Fe-2S protein.</text>
</comment>
<comment type="similarity">
    <text evidence="1">Belongs to the Rieske iron-sulfur protein family.</text>
</comment>
<feature type="chain" id="PRO_1000142567" description="Cytochrome b6-f complex iron-sulfur subunit">
    <location>
        <begin position="1"/>
        <end position="179"/>
    </location>
</feature>
<feature type="transmembrane region" description="Helical" evidence="1">
    <location>
        <begin position="20"/>
        <end position="42"/>
    </location>
</feature>
<feature type="domain" description="Rieske" evidence="1">
    <location>
        <begin position="60"/>
        <end position="161"/>
    </location>
</feature>
<feature type="binding site" evidence="1">
    <location>
        <position position="107"/>
    </location>
    <ligand>
        <name>[2Fe-2S] cluster</name>
        <dbReference type="ChEBI" id="CHEBI:190135"/>
    </ligand>
</feature>
<feature type="binding site" evidence="1">
    <location>
        <position position="109"/>
    </location>
    <ligand>
        <name>[2Fe-2S] cluster</name>
        <dbReference type="ChEBI" id="CHEBI:190135"/>
    </ligand>
</feature>
<feature type="binding site" evidence="1">
    <location>
        <position position="125"/>
    </location>
    <ligand>
        <name>[2Fe-2S] cluster</name>
        <dbReference type="ChEBI" id="CHEBI:190135"/>
    </ligand>
</feature>
<feature type="binding site" evidence="1">
    <location>
        <position position="128"/>
    </location>
    <ligand>
        <name>[2Fe-2S] cluster</name>
        <dbReference type="ChEBI" id="CHEBI:190135"/>
    </ligand>
</feature>
<feature type="disulfide bond" evidence="1">
    <location>
        <begin position="112"/>
        <end position="127"/>
    </location>
</feature>
<evidence type="ECO:0000255" key="1">
    <source>
        <dbReference type="HAMAP-Rule" id="MF_01335"/>
    </source>
</evidence>
<organism>
    <name type="scientific">Microcystis aeruginosa (strain NIES-843 / IAM M-2473)</name>
    <dbReference type="NCBI Taxonomy" id="449447"/>
    <lineage>
        <taxon>Bacteria</taxon>
        <taxon>Bacillati</taxon>
        <taxon>Cyanobacteriota</taxon>
        <taxon>Cyanophyceae</taxon>
        <taxon>Oscillatoriophycideae</taxon>
        <taxon>Chroococcales</taxon>
        <taxon>Microcystaceae</taxon>
        <taxon>Microcystis</taxon>
    </lineage>
</organism>
<accession>B0JXB7</accession>
<reference key="1">
    <citation type="journal article" date="2007" name="DNA Res.">
        <title>Complete genomic structure of the bloom-forming toxic cyanobacterium Microcystis aeruginosa NIES-843.</title>
        <authorList>
            <person name="Kaneko T."/>
            <person name="Nakajima N."/>
            <person name="Okamoto S."/>
            <person name="Suzuki I."/>
            <person name="Tanabe Y."/>
            <person name="Tamaoki M."/>
            <person name="Nakamura Y."/>
            <person name="Kasai F."/>
            <person name="Watanabe A."/>
            <person name="Kawashima K."/>
            <person name="Kishida Y."/>
            <person name="Ono A."/>
            <person name="Shimizu Y."/>
            <person name="Takahashi C."/>
            <person name="Minami C."/>
            <person name="Fujishiro T."/>
            <person name="Kohara M."/>
            <person name="Katoh M."/>
            <person name="Nakazaki N."/>
            <person name="Nakayama S."/>
            <person name="Yamada M."/>
            <person name="Tabata S."/>
            <person name="Watanabe M.M."/>
        </authorList>
    </citation>
    <scope>NUCLEOTIDE SEQUENCE [LARGE SCALE GENOMIC DNA]</scope>
    <source>
        <strain>NIES-843 / IAM M-247</strain>
    </source>
</reference>
<proteinExistence type="inferred from homology"/>